<gene>
    <name type="primary">prsA2</name>
    <name type="ordered locus">spyM18_2097</name>
</gene>
<evidence type="ECO:0000250" key="1"/>
<evidence type="ECO:0000255" key="2"/>
<evidence type="ECO:0000305" key="3"/>
<proteinExistence type="inferred from homology"/>
<dbReference type="EC" id="5.2.1.8"/>
<dbReference type="EMBL" id="AE009949">
    <property type="protein sequence ID" value="AAL98558.1"/>
    <property type="molecule type" value="Genomic_DNA"/>
</dbReference>
<dbReference type="SMR" id="P60813"/>
<dbReference type="KEGG" id="spm:spyM18_2097"/>
<dbReference type="HOGENOM" id="CLU_034646_6_0_9"/>
<dbReference type="GO" id="GO:0005886">
    <property type="term" value="C:plasma membrane"/>
    <property type="evidence" value="ECO:0007669"/>
    <property type="project" value="UniProtKB-SubCell"/>
</dbReference>
<dbReference type="GO" id="GO:0003755">
    <property type="term" value="F:peptidyl-prolyl cis-trans isomerase activity"/>
    <property type="evidence" value="ECO:0007669"/>
    <property type="project" value="UniProtKB-UniRule"/>
</dbReference>
<dbReference type="GO" id="GO:0006457">
    <property type="term" value="P:protein folding"/>
    <property type="evidence" value="ECO:0007669"/>
    <property type="project" value="UniProtKB-UniRule"/>
</dbReference>
<dbReference type="Gene3D" id="3.10.50.40">
    <property type="match status" value="1"/>
</dbReference>
<dbReference type="Gene3D" id="1.10.4030.10">
    <property type="entry name" value="Porin chaperone SurA, peptide-binding domain"/>
    <property type="match status" value="1"/>
</dbReference>
<dbReference type="HAMAP" id="MF_01145">
    <property type="entry name" value="Foldase_PrsA"/>
    <property type="match status" value="1"/>
</dbReference>
<dbReference type="InterPro" id="IPR023059">
    <property type="entry name" value="Foldase_PrsA"/>
</dbReference>
<dbReference type="InterPro" id="IPR046357">
    <property type="entry name" value="PPIase_dom_sf"/>
</dbReference>
<dbReference type="InterPro" id="IPR000297">
    <property type="entry name" value="PPIase_PpiC"/>
</dbReference>
<dbReference type="InterPro" id="IPR050245">
    <property type="entry name" value="PrsA_foldase"/>
</dbReference>
<dbReference type="InterPro" id="IPR027304">
    <property type="entry name" value="Trigger_fact/SurA_dom_sf"/>
</dbReference>
<dbReference type="NCBIfam" id="NF002361">
    <property type="entry name" value="PRK01326.1"/>
    <property type="match status" value="1"/>
</dbReference>
<dbReference type="NCBIfam" id="NF009105">
    <property type="entry name" value="PRK12450.1"/>
    <property type="match status" value="1"/>
</dbReference>
<dbReference type="PANTHER" id="PTHR47245:SF1">
    <property type="entry name" value="FOLDASE PROTEIN PRSA"/>
    <property type="match status" value="1"/>
</dbReference>
<dbReference type="PANTHER" id="PTHR47245">
    <property type="entry name" value="PEPTIDYLPROLYL ISOMERASE"/>
    <property type="match status" value="1"/>
</dbReference>
<dbReference type="Pfam" id="PF13145">
    <property type="entry name" value="Rotamase_2"/>
    <property type="match status" value="1"/>
</dbReference>
<dbReference type="SUPFAM" id="SSF54534">
    <property type="entry name" value="FKBP-like"/>
    <property type="match status" value="1"/>
</dbReference>
<dbReference type="SUPFAM" id="SSF109998">
    <property type="entry name" value="Triger factor/SurA peptide-binding domain-like"/>
    <property type="match status" value="1"/>
</dbReference>
<dbReference type="PROSITE" id="PS50198">
    <property type="entry name" value="PPIC_PPIASE_2"/>
    <property type="match status" value="1"/>
</dbReference>
<dbReference type="PROSITE" id="PS51257">
    <property type="entry name" value="PROKAR_LIPOPROTEIN"/>
    <property type="match status" value="1"/>
</dbReference>
<feature type="signal peptide" evidence="2">
    <location>
        <begin position="1"/>
        <end position="22"/>
    </location>
</feature>
<feature type="chain" id="PRO_0000029336" description="Foldase protein PrsA 2">
    <location>
        <begin position="23"/>
        <end position="309"/>
    </location>
</feature>
<feature type="domain" description="PpiC">
    <location>
        <begin position="146"/>
        <end position="241"/>
    </location>
</feature>
<feature type="lipid moiety-binding region" description="N-palmitoyl cysteine" evidence="2">
    <location>
        <position position="23"/>
    </location>
</feature>
<feature type="lipid moiety-binding region" description="S-diacylglycerol cysteine" evidence="2">
    <location>
        <position position="23"/>
    </location>
</feature>
<protein>
    <recommendedName>
        <fullName>Foldase protein PrsA 2</fullName>
        <ecNumber>5.2.1.8</ecNumber>
    </recommendedName>
</protein>
<comment type="function">
    <text evidence="1">Plays a major role in protein secretion by helping the post-translocational extracellular folding of several secreted proteins.</text>
</comment>
<comment type="catalytic activity">
    <reaction>
        <text>[protein]-peptidylproline (omega=180) = [protein]-peptidylproline (omega=0)</text>
        <dbReference type="Rhea" id="RHEA:16237"/>
        <dbReference type="Rhea" id="RHEA-COMP:10747"/>
        <dbReference type="Rhea" id="RHEA-COMP:10748"/>
        <dbReference type="ChEBI" id="CHEBI:83833"/>
        <dbReference type="ChEBI" id="CHEBI:83834"/>
        <dbReference type="EC" id="5.2.1.8"/>
    </reaction>
</comment>
<comment type="subcellular location">
    <subcellularLocation>
        <location evidence="3">Cell membrane</location>
        <topology evidence="3">Lipid-anchor</topology>
    </subcellularLocation>
</comment>
<comment type="similarity">
    <text evidence="3">Belongs to the PrsA family.</text>
</comment>
<organism>
    <name type="scientific">Streptococcus pyogenes serotype M18 (strain MGAS8232)</name>
    <dbReference type="NCBI Taxonomy" id="186103"/>
    <lineage>
        <taxon>Bacteria</taxon>
        <taxon>Bacillati</taxon>
        <taxon>Bacillota</taxon>
        <taxon>Bacilli</taxon>
        <taxon>Lactobacillales</taxon>
        <taxon>Streptococcaceae</taxon>
        <taxon>Streptococcus</taxon>
    </lineage>
</organism>
<reference key="1">
    <citation type="journal article" date="2002" name="Proc. Natl. Acad. Sci. U.S.A.">
        <title>Genome sequence and comparative microarray analysis of serotype M18 group A Streptococcus strains associated with acute rheumatic fever outbreaks.</title>
        <authorList>
            <person name="Smoot J.C."/>
            <person name="Barbian K.D."/>
            <person name="Van Gompel J.J."/>
            <person name="Smoot L.M."/>
            <person name="Chaussee M.S."/>
            <person name="Sylva G.L."/>
            <person name="Sturdevant D.E."/>
            <person name="Ricklefs S.M."/>
            <person name="Porcella S.F."/>
            <person name="Parkins L.D."/>
            <person name="Beres S.B."/>
            <person name="Campbell D.S."/>
            <person name="Smith T.M."/>
            <person name="Zhang Q."/>
            <person name="Kapur V."/>
            <person name="Daly J.A."/>
            <person name="Veasy L.G."/>
            <person name="Musser J.M."/>
        </authorList>
    </citation>
    <scope>NUCLEOTIDE SEQUENCE [LARGE SCALE GENOMIC DNA]</scope>
    <source>
        <strain>MGAS8232</strain>
    </source>
</reference>
<accession>P60813</accession>
<accession>Q99XT9</accession>
<name>PRSA2_STRP8</name>
<sequence>MKQMNKLITGVVTLATVVTLSACQSSHNNTKLVSMKGDTITVSDFYNETKNTELAQKAMLSLVISRVFETQYANKVSDKEVEKAYKQTADQYGTSFKTVLAQSGLTPETYKKQIRLTKLVEYAVKEQAKNETISKKDYRQAYDAYTPTMTAEIMQFEKEEDAKAALEAVKAEGADFAAIAKEKTTAADKKTTYTFDSGETTLPAEVVRAASGLKEGNRSEIITALDPATSKRTYHIIKVTKKATKKADWKAYQKRLKDIIVTGKLKDPDFQNKVIAKALDKANVKIKDKAFANILAQFAKPNQKQPAQK</sequence>
<keyword id="KW-1003">Cell membrane</keyword>
<keyword id="KW-0413">Isomerase</keyword>
<keyword id="KW-0449">Lipoprotein</keyword>
<keyword id="KW-0472">Membrane</keyword>
<keyword id="KW-0564">Palmitate</keyword>
<keyword id="KW-0697">Rotamase</keyword>
<keyword id="KW-0732">Signal</keyword>